<sequence length="328" mass="38246">MTMSAFDLTKQSTRCTKPEMDCVFPRMKVRDETFTFIDGKWVNEVHCQPTFVPQRRLLSKKTENEWSIWEENRALWEENQVLRIENRMLWEENKALQYLQSQNKGVQLVYSDTIQQSLQKDHKLSPFFPERHLGFQVSPGNKALQLVRERSSVLEFFHRQNRTVPTIWKDQQAIVVHEENKGASSVQKDTENTTAAGEGSLGPTCQEEHDAKEESTTPTQNDTKIAPSTEDDNEILQALQDLYQILRVFLKEKCLSDDRESLHALQDESKFFQEEYKKLKLQLNNVKNTVSDITTQMEMLEKELIAITFPIYEEAGKNMANEYQLGEM</sequence>
<dbReference type="EMBL" id="AY332745">
    <property type="protein sequence ID" value="AAQ79784.1"/>
    <property type="molecule type" value="mRNA"/>
</dbReference>
<dbReference type="RefSeq" id="NP_001075170.1">
    <property type="nucleotide sequence ID" value="NM_001081701.1"/>
</dbReference>
<dbReference type="RefSeq" id="XP_015131014.1">
    <property type="nucleotide sequence ID" value="XM_015275528.1"/>
</dbReference>
<dbReference type="RefSeq" id="XP_015131018.1">
    <property type="nucleotide sequence ID" value="XM_015275532.1"/>
</dbReference>
<dbReference type="SMR" id="A1KXM5"/>
<dbReference type="FunCoup" id="A1KXM5">
    <property type="interactions" value="43"/>
</dbReference>
<dbReference type="STRING" id="9031.ENSGALP00000027383"/>
<dbReference type="PaxDb" id="9031-ENSGALP00000027383"/>
<dbReference type="Ensembl" id="ENSGALT00010008562.1">
    <property type="protein sequence ID" value="ENSGALP00010005004.1"/>
    <property type="gene ID" value="ENSGALG00010003713.1"/>
</dbReference>
<dbReference type="Ensembl" id="ENSGALT00010008563.1">
    <property type="protein sequence ID" value="ENSGALP00010005005.1"/>
    <property type="gene ID" value="ENSGALG00010003713.1"/>
</dbReference>
<dbReference type="Ensembl" id="ENSGALT00010008564.1">
    <property type="protein sequence ID" value="ENSGALP00010005006.1"/>
    <property type="gene ID" value="ENSGALG00010003713.1"/>
</dbReference>
<dbReference type="Ensembl" id="ENSGALT00010008566.1">
    <property type="protein sequence ID" value="ENSGALP00010005008.1"/>
    <property type="gene ID" value="ENSGALG00010003713.1"/>
</dbReference>
<dbReference type="Ensembl" id="ENSGALT00010008568.1">
    <property type="protein sequence ID" value="ENSGALP00010005010.1"/>
    <property type="gene ID" value="ENSGALG00010003713.1"/>
</dbReference>
<dbReference type="Ensembl" id="ENSGALT00010008569.1">
    <property type="protein sequence ID" value="ENSGALP00010005011.1"/>
    <property type="gene ID" value="ENSGALG00010003713.1"/>
</dbReference>
<dbReference type="Ensembl" id="ENSGALT00010008571.1">
    <property type="protein sequence ID" value="ENSGALP00010005013.1"/>
    <property type="gene ID" value="ENSGALG00010003713.1"/>
</dbReference>
<dbReference type="GeneID" id="418848"/>
<dbReference type="KEGG" id="gga:418848"/>
<dbReference type="CTD" id="418848"/>
<dbReference type="VEuPathDB" id="HostDB:geneid_418848"/>
<dbReference type="eggNOG" id="ENOG502S6IZ">
    <property type="taxonomic scope" value="Eukaryota"/>
</dbReference>
<dbReference type="GeneTree" id="ENSGT00940000169379"/>
<dbReference type="HOGENOM" id="CLU_892899_0_0_1"/>
<dbReference type="InParanoid" id="A1KXM5"/>
<dbReference type="OMA" id="QNEWSIW"/>
<dbReference type="OrthoDB" id="9025135at2759"/>
<dbReference type="PhylomeDB" id="A1KXM5"/>
<dbReference type="PRO" id="PR:A1KXM5"/>
<dbReference type="Proteomes" id="UP000000539">
    <property type="component" value="Chromosome 1"/>
</dbReference>
<dbReference type="Bgee" id="ENSGALG00000016981">
    <property type="expression patterns" value="Expressed in testis and 9 other cell types or tissues"/>
</dbReference>
<dbReference type="InterPro" id="IPR028118">
    <property type="entry name" value="Chibby_fam"/>
</dbReference>
<dbReference type="PANTHER" id="PTHR21533">
    <property type="entry name" value="LEUCINE-RICH PROTEIN"/>
    <property type="match status" value="1"/>
</dbReference>
<dbReference type="PANTHER" id="PTHR21533:SF17">
    <property type="entry name" value="PROTEIN CHIBBY HOMOLOG 3"/>
    <property type="match status" value="1"/>
</dbReference>
<dbReference type="Pfam" id="PF14645">
    <property type="entry name" value="Chibby"/>
    <property type="match status" value="1"/>
</dbReference>
<comment type="similarity">
    <text evidence="3">Belongs to the chibby family. SPERT subfamily.</text>
</comment>
<keyword id="KW-0175">Coiled coil</keyword>
<keyword id="KW-1185">Reference proteome</keyword>
<gene>
    <name type="primary">CBY2</name>
    <name type="synonym">SPERT</name>
</gene>
<organism>
    <name type="scientific">Gallus gallus</name>
    <name type="common">Chicken</name>
    <dbReference type="NCBI Taxonomy" id="9031"/>
    <lineage>
        <taxon>Eukaryota</taxon>
        <taxon>Metazoa</taxon>
        <taxon>Chordata</taxon>
        <taxon>Craniata</taxon>
        <taxon>Vertebrata</taxon>
        <taxon>Euteleostomi</taxon>
        <taxon>Archelosauria</taxon>
        <taxon>Archosauria</taxon>
        <taxon>Dinosauria</taxon>
        <taxon>Saurischia</taxon>
        <taxon>Theropoda</taxon>
        <taxon>Coelurosauria</taxon>
        <taxon>Aves</taxon>
        <taxon>Neognathae</taxon>
        <taxon>Galloanserae</taxon>
        <taxon>Galliformes</taxon>
        <taxon>Phasianidae</taxon>
        <taxon>Phasianinae</taxon>
        <taxon>Gallus</taxon>
    </lineage>
</organism>
<name>CBY2_CHICK</name>
<proteinExistence type="evidence at transcript level"/>
<protein>
    <recommendedName>
        <fullName evidence="3">Protein chibby homolog 2</fullName>
    </recommendedName>
    <alternativeName>
        <fullName>Leucine-zipper protein T/MroI-1</fullName>
    </alternativeName>
    <alternativeName>
        <fullName>Spermatid-associated protein</fullName>
    </alternativeName>
</protein>
<reference key="1">
    <citation type="journal article" date="2004" name="J. Neurobiol.">
        <title>Large-scale identification and characterization of genes with asymmetric expression patterns in the developing chick retina.</title>
        <authorList>
            <person name="Shintani T."/>
            <person name="Kato A."/>
            <person name="Yuasa-Kawada J."/>
            <person name="Sakuta H."/>
            <person name="Takahashi M."/>
            <person name="Suzuki R."/>
            <person name="Ohkawara T."/>
            <person name="Takahashi H."/>
            <person name="Noda M."/>
        </authorList>
    </citation>
    <scope>NUCLEOTIDE SEQUENCE [MRNA]</scope>
    <source>
        <strain>White leghorn</strain>
        <tissue>Retina</tissue>
    </source>
</reference>
<evidence type="ECO:0000255" key="1"/>
<evidence type="ECO:0000256" key="2">
    <source>
        <dbReference type="SAM" id="MobiDB-lite"/>
    </source>
</evidence>
<evidence type="ECO:0000305" key="3"/>
<accession>A1KXM5</accession>
<feature type="chain" id="PRO_0000307295" description="Protein chibby homolog 2">
    <location>
        <begin position="1"/>
        <end position="328"/>
    </location>
</feature>
<feature type="region of interest" description="Disordered" evidence="2">
    <location>
        <begin position="180"/>
        <end position="231"/>
    </location>
</feature>
<feature type="coiled-coil region" evidence="1">
    <location>
        <begin position="259"/>
        <end position="307"/>
    </location>
</feature>
<feature type="compositionally biased region" description="Polar residues" evidence="2">
    <location>
        <begin position="182"/>
        <end position="195"/>
    </location>
</feature>
<feature type="compositionally biased region" description="Basic and acidic residues" evidence="2">
    <location>
        <begin position="206"/>
        <end position="215"/>
    </location>
</feature>